<proteinExistence type="inferred from homology"/>
<keyword id="KW-0687">Ribonucleoprotein</keyword>
<keyword id="KW-0689">Ribosomal protein</keyword>
<protein>
    <recommendedName>
        <fullName evidence="1">Small ribosomal subunit protein uS2</fullName>
    </recommendedName>
    <alternativeName>
        <fullName evidence="3">30S ribosomal protein S2</fullName>
    </alternativeName>
</protein>
<sequence>MAQITMSDMLKAGLHFGHQTRRWNPKMKQFILTQRNGIHIINLFKSLDMIDKAYDFIKTTVAHNGTVLFVGTKKQAQEAIANQATRVNMPYVSERWLGGMLTNFQTVSKRVNRLKELEEMDFTDVHGSGLTKKELLLLEREKDKLNKQLGGIRNMNRTPSAMFVVDITKETLAVEEAHKLGIPVVAIVDTNADPDTVEYPIPANDDAIRGIELLTSLMADAVAEGLLERSGANKTEGEAAEQPMAAWEKELLTNEAPAEASAEAAAPAAAEGETAEAPKAE</sequence>
<reference key="1">
    <citation type="journal article" date="2008" name="Proc. Natl. Acad. Sci. U.S.A.">
        <title>The genome sequence of Bifidobacterium longum subsp. infantis reveals adaptations for milk utilization within the infant microbiome.</title>
        <authorList>
            <person name="Sela D.A."/>
            <person name="Chapman J."/>
            <person name="Adeuya A."/>
            <person name="Kim J.H."/>
            <person name="Chen F."/>
            <person name="Whitehead T.R."/>
            <person name="Lapidus A."/>
            <person name="Rokhsar D.S."/>
            <person name="Lebrilla C.B."/>
            <person name="German J.B."/>
            <person name="Price N.P."/>
            <person name="Richardson P.M."/>
            <person name="Mills D.A."/>
        </authorList>
    </citation>
    <scope>NUCLEOTIDE SEQUENCE [LARGE SCALE GENOMIC DNA]</scope>
    <source>
        <strain>ATCC 15697 / DSM 20088 / JCM 1222 / NCTC 11817 / S12</strain>
    </source>
</reference>
<reference key="2">
    <citation type="journal article" date="2011" name="Nature">
        <title>Bifidobacteria can protect from enteropathogenic infection through production of acetate.</title>
        <authorList>
            <person name="Fukuda S."/>
            <person name="Toh H."/>
            <person name="Hase K."/>
            <person name="Oshima K."/>
            <person name="Nakanishi Y."/>
            <person name="Yoshimura K."/>
            <person name="Tobe T."/>
            <person name="Clarke J.M."/>
            <person name="Topping D.L."/>
            <person name="Suzuki T."/>
            <person name="Taylor T.D."/>
            <person name="Itoh K."/>
            <person name="Kikuchi J."/>
            <person name="Morita H."/>
            <person name="Hattori M."/>
            <person name="Ohno H."/>
        </authorList>
    </citation>
    <scope>NUCLEOTIDE SEQUENCE [LARGE SCALE GENOMIC DNA]</scope>
    <source>
        <strain>ATCC 15697 / DSM 20088 / JCM 1222 / NCTC 11817 / S12</strain>
    </source>
</reference>
<name>RS2_BIFLS</name>
<accession>B7GQR8</accession>
<accession>E8MJE1</accession>
<evidence type="ECO:0000255" key="1">
    <source>
        <dbReference type="HAMAP-Rule" id="MF_00291"/>
    </source>
</evidence>
<evidence type="ECO:0000256" key="2">
    <source>
        <dbReference type="SAM" id="MobiDB-lite"/>
    </source>
</evidence>
<evidence type="ECO:0000305" key="3"/>
<feature type="chain" id="PRO_1000194320" description="Small ribosomal subunit protein uS2">
    <location>
        <begin position="1"/>
        <end position="281"/>
    </location>
</feature>
<feature type="region of interest" description="Disordered" evidence="2">
    <location>
        <begin position="229"/>
        <end position="281"/>
    </location>
</feature>
<feature type="compositionally biased region" description="Low complexity" evidence="2">
    <location>
        <begin position="255"/>
        <end position="275"/>
    </location>
</feature>
<dbReference type="EMBL" id="CP001095">
    <property type="protein sequence ID" value="ACJ52148.1"/>
    <property type="molecule type" value="Genomic_DNA"/>
</dbReference>
<dbReference type="EMBL" id="AP010889">
    <property type="protein sequence ID" value="BAJ68668.1"/>
    <property type="status" value="ALT_INIT"/>
    <property type="molecule type" value="Genomic_DNA"/>
</dbReference>
<dbReference type="RefSeq" id="WP_012577408.1">
    <property type="nucleotide sequence ID" value="NZ_JDTT01000016.1"/>
</dbReference>
<dbReference type="SMR" id="B7GQR8"/>
<dbReference type="KEGG" id="bln:Blon_1056"/>
<dbReference type="KEGG" id="blon:BLIJ_1080"/>
<dbReference type="PATRIC" id="fig|391904.8.peg.1077"/>
<dbReference type="HOGENOM" id="CLU_040318_2_3_11"/>
<dbReference type="Proteomes" id="UP000001360">
    <property type="component" value="Chromosome"/>
</dbReference>
<dbReference type="GO" id="GO:0022627">
    <property type="term" value="C:cytosolic small ribosomal subunit"/>
    <property type="evidence" value="ECO:0007669"/>
    <property type="project" value="TreeGrafter"/>
</dbReference>
<dbReference type="GO" id="GO:0003735">
    <property type="term" value="F:structural constituent of ribosome"/>
    <property type="evidence" value="ECO:0007669"/>
    <property type="project" value="InterPro"/>
</dbReference>
<dbReference type="GO" id="GO:0006412">
    <property type="term" value="P:translation"/>
    <property type="evidence" value="ECO:0007669"/>
    <property type="project" value="UniProtKB-UniRule"/>
</dbReference>
<dbReference type="CDD" id="cd01425">
    <property type="entry name" value="RPS2"/>
    <property type="match status" value="1"/>
</dbReference>
<dbReference type="FunFam" id="1.10.287.610:FF:000001">
    <property type="entry name" value="30S ribosomal protein S2"/>
    <property type="match status" value="1"/>
</dbReference>
<dbReference type="Gene3D" id="3.40.50.10490">
    <property type="entry name" value="Glucose-6-phosphate isomerase like protein, domain 1"/>
    <property type="match status" value="1"/>
</dbReference>
<dbReference type="Gene3D" id="1.10.287.610">
    <property type="entry name" value="Helix hairpin bin"/>
    <property type="match status" value="1"/>
</dbReference>
<dbReference type="HAMAP" id="MF_00291_B">
    <property type="entry name" value="Ribosomal_uS2_B"/>
    <property type="match status" value="1"/>
</dbReference>
<dbReference type="InterPro" id="IPR001865">
    <property type="entry name" value="Ribosomal_uS2"/>
</dbReference>
<dbReference type="InterPro" id="IPR005706">
    <property type="entry name" value="Ribosomal_uS2_bac/mit/plastid"/>
</dbReference>
<dbReference type="InterPro" id="IPR018130">
    <property type="entry name" value="Ribosomal_uS2_CS"/>
</dbReference>
<dbReference type="InterPro" id="IPR023591">
    <property type="entry name" value="Ribosomal_uS2_flav_dom_sf"/>
</dbReference>
<dbReference type="NCBIfam" id="TIGR01011">
    <property type="entry name" value="rpsB_bact"/>
    <property type="match status" value="1"/>
</dbReference>
<dbReference type="PANTHER" id="PTHR12534">
    <property type="entry name" value="30S RIBOSOMAL PROTEIN S2 PROKARYOTIC AND ORGANELLAR"/>
    <property type="match status" value="1"/>
</dbReference>
<dbReference type="PANTHER" id="PTHR12534:SF0">
    <property type="entry name" value="SMALL RIBOSOMAL SUBUNIT PROTEIN US2M"/>
    <property type="match status" value="1"/>
</dbReference>
<dbReference type="Pfam" id="PF00318">
    <property type="entry name" value="Ribosomal_S2"/>
    <property type="match status" value="1"/>
</dbReference>
<dbReference type="PRINTS" id="PR00395">
    <property type="entry name" value="RIBOSOMALS2"/>
</dbReference>
<dbReference type="SUPFAM" id="SSF52313">
    <property type="entry name" value="Ribosomal protein S2"/>
    <property type="match status" value="1"/>
</dbReference>
<dbReference type="PROSITE" id="PS00962">
    <property type="entry name" value="RIBOSOMAL_S2_1"/>
    <property type="match status" value="1"/>
</dbReference>
<dbReference type="PROSITE" id="PS00963">
    <property type="entry name" value="RIBOSOMAL_S2_2"/>
    <property type="match status" value="1"/>
</dbReference>
<organism>
    <name type="scientific">Bifidobacterium longum subsp. infantis (strain ATCC 15697 / DSM 20088 / JCM 1222 / NCTC 11817 / S12)</name>
    <dbReference type="NCBI Taxonomy" id="391904"/>
    <lineage>
        <taxon>Bacteria</taxon>
        <taxon>Bacillati</taxon>
        <taxon>Actinomycetota</taxon>
        <taxon>Actinomycetes</taxon>
        <taxon>Bifidobacteriales</taxon>
        <taxon>Bifidobacteriaceae</taxon>
        <taxon>Bifidobacterium</taxon>
    </lineage>
</organism>
<gene>
    <name evidence="1" type="primary">rpsB</name>
    <name type="ordered locus">Blon_1056</name>
    <name type="ordered locus">BLIJ_1080</name>
</gene>
<comment type="similarity">
    <text evidence="1">Belongs to the universal ribosomal protein uS2 family.</text>
</comment>
<comment type="sequence caution" evidence="3">
    <conflict type="erroneous initiation">
        <sequence resource="EMBL-CDS" id="BAJ68668"/>
    </conflict>
    <text>Extended N-terminus.</text>
</comment>